<sequence length="489" mass="54418">MLKTQEIYSSEDEDDMCCPLCMEEIDISDKNFKPCQCGYRVCRFCWHHIKEDLNGRCPACRRLYTEENVQWRPVTAEEWKMDLHRKNERKKREKERKEVELSNRKHLANIRVVQKNLAYVNGLSPKVANEENINVLKGPEYFGQYGKIIKIAINKKAAANSANGHVGVYITYQRKEDAARAIAAIDGSVSDGRHLRASYGTTKYCTSYLRNQQCPNPSCMYLHEPGDEVDSYTKEDLASLQHTRPLSTKPNVVNGATHSPSPSLPFKTPLLPVTKTPLEEANSSPAAQNQHITTVDHVHPQVSMTPSLSTNNTATSVPAPYSSAASVNVVPGHATTILHHEESSALPPTAAWAKLSPSVLQERLRAAVNQQPLDALKSSSTQTSIPKIQKLKAAKLPSEEENTTKWLNKAINDLVSSLSKINFSTEGTEFDKKQIEMIQNLPPLFVFNARSVIDKEVVPEQEKSAENQPPTSLGINNGNPVMPPPGFQS</sequence>
<protein>
    <recommendedName>
        <fullName>Putative general negative regulator of transcription C16C9.04c</fullName>
    </recommendedName>
</protein>
<keyword id="KW-0175">Coiled coil</keyword>
<keyword id="KW-0479">Metal-binding</keyword>
<keyword id="KW-0539">Nucleus</keyword>
<keyword id="KW-1185">Reference proteome</keyword>
<keyword id="KW-0678">Repressor</keyword>
<keyword id="KW-0694">RNA-binding</keyword>
<keyword id="KW-0804">Transcription</keyword>
<keyword id="KW-0805">Transcription regulation</keyword>
<keyword id="KW-0862">Zinc</keyword>
<keyword id="KW-0863">Zinc-finger</keyword>
<organism>
    <name type="scientific">Schizosaccharomyces pombe (strain 972 / ATCC 24843)</name>
    <name type="common">Fission yeast</name>
    <dbReference type="NCBI Taxonomy" id="284812"/>
    <lineage>
        <taxon>Eukaryota</taxon>
        <taxon>Fungi</taxon>
        <taxon>Dikarya</taxon>
        <taxon>Ascomycota</taxon>
        <taxon>Taphrinomycotina</taxon>
        <taxon>Schizosaccharomycetes</taxon>
        <taxon>Schizosaccharomycetales</taxon>
        <taxon>Schizosaccharomycetaceae</taxon>
        <taxon>Schizosaccharomyces</taxon>
    </lineage>
</organism>
<dbReference type="EMBL" id="CU329670">
    <property type="protein sequence ID" value="CAA91192.1"/>
    <property type="molecule type" value="Genomic_DNA"/>
</dbReference>
<dbReference type="PIR" id="T37777">
    <property type="entry name" value="S62474"/>
</dbReference>
<dbReference type="SMR" id="Q09818"/>
<dbReference type="BioGRID" id="278791">
    <property type="interactions" value="11"/>
</dbReference>
<dbReference type="ComplexPortal" id="CPX-25774">
    <property type="entry name" value="CCR4-NOT mRNA deadenylase complex"/>
</dbReference>
<dbReference type="FunCoup" id="Q09818">
    <property type="interactions" value="143"/>
</dbReference>
<dbReference type="STRING" id="284812.Q09818"/>
<dbReference type="iPTMnet" id="Q09818"/>
<dbReference type="PaxDb" id="4896-SPAC16C9.04c.1"/>
<dbReference type="EnsemblFungi" id="SPAC16C9.04c.1">
    <property type="protein sequence ID" value="SPAC16C9.04c.1:pep"/>
    <property type="gene ID" value="SPAC16C9.04c"/>
</dbReference>
<dbReference type="KEGG" id="spo:2542325"/>
<dbReference type="PomBase" id="SPAC16C9.04c"/>
<dbReference type="VEuPathDB" id="FungiDB:SPAC16C9.04c"/>
<dbReference type="eggNOG" id="KOG2068">
    <property type="taxonomic scope" value="Eukaryota"/>
</dbReference>
<dbReference type="HOGENOM" id="CLU_028046_0_0_1"/>
<dbReference type="InParanoid" id="Q09818"/>
<dbReference type="OMA" id="EENVQWR"/>
<dbReference type="PhylomeDB" id="Q09818"/>
<dbReference type="PRO" id="PR:Q09818"/>
<dbReference type="Proteomes" id="UP000002485">
    <property type="component" value="Chromosome I"/>
</dbReference>
<dbReference type="GO" id="GO:0030014">
    <property type="term" value="C:CCR4-NOT complex"/>
    <property type="evidence" value="ECO:0000314"/>
    <property type="project" value="PomBase"/>
</dbReference>
<dbReference type="GO" id="GO:0030015">
    <property type="term" value="C:CCR4-NOT core complex"/>
    <property type="evidence" value="ECO:0000314"/>
    <property type="project" value="PomBase"/>
</dbReference>
<dbReference type="GO" id="GO:0005829">
    <property type="term" value="C:cytosol"/>
    <property type="evidence" value="ECO:0007005"/>
    <property type="project" value="PomBase"/>
</dbReference>
<dbReference type="GO" id="GO:0005634">
    <property type="term" value="C:nucleus"/>
    <property type="evidence" value="ECO:0007669"/>
    <property type="project" value="UniProtKB-SubCell"/>
</dbReference>
<dbReference type="GO" id="GO:0003723">
    <property type="term" value="F:RNA binding"/>
    <property type="evidence" value="ECO:0000255"/>
    <property type="project" value="PomBase"/>
</dbReference>
<dbReference type="GO" id="GO:0061630">
    <property type="term" value="F:ubiquitin protein ligase activity"/>
    <property type="evidence" value="ECO:0000269"/>
    <property type="project" value="PomBase"/>
</dbReference>
<dbReference type="GO" id="GO:0004842">
    <property type="term" value="F:ubiquitin-protein transferase activity"/>
    <property type="evidence" value="ECO:0000318"/>
    <property type="project" value="GO_Central"/>
</dbReference>
<dbReference type="GO" id="GO:0008270">
    <property type="term" value="F:zinc ion binding"/>
    <property type="evidence" value="ECO:0007669"/>
    <property type="project" value="UniProtKB-KW"/>
</dbReference>
<dbReference type="GO" id="GO:0120271">
    <property type="term" value="P:negative regulation of nuclear mRNA surveillance of meiosis-specific transcripts"/>
    <property type="evidence" value="ECO:0000315"/>
    <property type="project" value="PomBase"/>
</dbReference>
<dbReference type="GO" id="GO:0000289">
    <property type="term" value="P:nuclear-transcribed mRNA poly(A) tail shortening"/>
    <property type="evidence" value="ECO:0000314"/>
    <property type="project" value="PomBase"/>
</dbReference>
<dbReference type="GO" id="GO:0016567">
    <property type="term" value="P:protein ubiquitination"/>
    <property type="evidence" value="ECO:0000318"/>
    <property type="project" value="GO_Central"/>
</dbReference>
<dbReference type="GO" id="GO:0031047">
    <property type="term" value="P:regulatory ncRNA-mediated gene silencing"/>
    <property type="evidence" value="ECO:0000269"/>
    <property type="project" value="PomBase"/>
</dbReference>
<dbReference type="CDD" id="cd16618">
    <property type="entry name" value="mRING-HC-C4C4_CNOT4"/>
    <property type="match status" value="1"/>
</dbReference>
<dbReference type="FunFam" id="3.30.70.330:FF:000257">
    <property type="entry name" value="CCR4-NOT core complex subunit Not4"/>
    <property type="match status" value="1"/>
</dbReference>
<dbReference type="FunFam" id="3.30.40.10:FF:000006">
    <property type="entry name" value="CCR4-NOT transcription complex subunit 4"/>
    <property type="match status" value="1"/>
</dbReference>
<dbReference type="Gene3D" id="3.30.70.330">
    <property type="match status" value="1"/>
</dbReference>
<dbReference type="Gene3D" id="3.30.40.10">
    <property type="entry name" value="Zinc/RING finger domain, C3HC4 (zinc finger)"/>
    <property type="match status" value="1"/>
</dbReference>
<dbReference type="InterPro" id="IPR039780">
    <property type="entry name" value="Mot2"/>
</dbReference>
<dbReference type="InterPro" id="IPR039515">
    <property type="entry name" value="NOT4_mRING-HC-C4C4"/>
</dbReference>
<dbReference type="InterPro" id="IPR012677">
    <property type="entry name" value="Nucleotide-bd_a/b_plait_sf"/>
</dbReference>
<dbReference type="InterPro" id="IPR035979">
    <property type="entry name" value="RBD_domain_sf"/>
</dbReference>
<dbReference type="InterPro" id="IPR000504">
    <property type="entry name" value="RRM_dom"/>
</dbReference>
<dbReference type="InterPro" id="IPR003954">
    <property type="entry name" value="RRM_dom_euk"/>
</dbReference>
<dbReference type="InterPro" id="IPR000571">
    <property type="entry name" value="Znf_CCCH"/>
</dbReference>
<dbReference type="InterPro" id="IPR001841">
    <property type="entry name" value="Znf_RING"/>
</dbReference>
<dbReference type="InterPro" id="IPR013083">
    <property type="entry name" value="Znf_RING/FYVE/PHD"/>
</dbReference>
<dbReference type="PANTHER" id="PTHR12603">
    <property type="entry name" value="CCR4-NOT TRANSCRIPTION COMPLEX RELATED"/>
    <property type="match status" value="1"/>
</dbReference>
<dbReference type="PANTHER" id="PTHR12603:SF0">
    <property type="entry name" value="CCR4-NOT TRANSCRIPTION COMPLEX SUBUNIT 4"/>
    <property type="match status" value="1"/>
</dbReference>
<dbReference type="Pfam" id="PF00076">
    <property type="entry name" value="RRM_1"/>
    <property type="match status" value="1"/>
</dbReference>
<dbReference type="Pfam" id="PF14570">
    <property type="entry name" value="zf-RING_4"/>
    <property type="match status" value="1"/>
</dbReference>
<dbReference type="SMART" id="SM00361">
    <property type="entry name" value="RRM_1"/>
    <property type="match status" value="1"/>
</dbReference>
<dbReference type="SUPFAM" id="SSF57850">
    <property type="entry name" value="RING/U-box"/>
    <property type="match status" value="1"/>
</dbReference>
<dbReference type="SUPFAM" id="SSF54928">
    <property type="entry name" value="RNA-binding domain, RBD"/>
    <property type="match status" value="1"/>
</dbReference>
<dbReference type="PROSITE" id="PS50102">
    <property type="entry name" value="RRM"/>
    <property type="match status" value="1"/>
</dbReference>
<dbReference type="PROSITE" id="PS50103">
    <property type="entry name" value="ZF_C3H1"/>
    <property type="match status" value="1"/>
</dbReference>
<dbReference type="PROSITE" id="PS50089">
    <property type="entry name" value="ZF_RING_2"/>
    <property type="match status" value="1"/>
</dbReference>
<feature type="chain" id="PRO_0000081682" description="Putative general negative regulator of transcription C16C9.04c">
    <location>
        <begin position="1"/>
        <end position="489"/>
    </location>
</feature>
<feature type="domain" description="RRM" evidence="4">
    <location>
        <begin position="116"/>
        <end position="198"/>
    </location>
</feature>
<feature type="zinc finger region" description="RING-type" evidence="3">
    <location>
        <begin position="18"/>
        <end position="61"/>
    </location>
</feature>
<feature type="zinc finger region" description="C3H1-type" evidence="5">
    <location>
        <begin position="199"/>
        <end position="226"/>
    </location>
</feature>
<feature type="region of interest" description="Disordered" evidence="6">
    <location>
        <begin position="246"/>
        <end position="268"/>
    </location>
</feature>
<feature type="region of interest" description="Disordered" evidence="6">
    <location>
        <begin position="458"/>
        <end position="489"/>
    </location>
</feature>
<feature type="coiled-coil region" evidence="2">
    <location>
        <begin position="76"/>
        <end position="109"/>
    </location>
</feature>
<feature type="compositionally biased region" description="Polar residues" evidence="6">
    <location>
        <begin position="246"/>
        <end position="261"/>
    </location>
</feature>
<feature type="compositionally biased region" description="Polar residues" evidence="6">
    <location>
        <begin position="466"/>
        <end position="479"/>
    </location>
</feature>
<comment type="function">
    <text evidence="1">May negatively regulate the basal and activated transcription of many genes.</text>
</comment>
<comment type="subcellular location">
    <subcellularLocation>
        <location evidence="7">Nucleus</location>
    </subcellularLocation>
</comment>
<gene>
    <name type="ORF">SPAC16C9.04c</name>
</gene>
<reference key="1">
    <citation type="journal article" date="2002" name="Nature">
        <title>The genome sequence of Schizosaccharomyces pombe.</title>
        <authorList>
            <person name="Wood V."/>
            <person name="Gwilliam R."/>
            <person name="Rajandream M.A."/>
            <person name="Lyne M.H."/>
            <person name="Lyne R."/>
            <person name="Stewart A."/>
            <person name="Sgouros J.G."/>
            <person name="Peat N."/>
            <person name="Hayles J."/>
            <person name="Baker S.G."/>
            <person name="Basham D."/>
            <person name="Bowman S."/>
            <person name="Brooks K."/>
            <person name="Brown D."/>
            <person name="Brown S."/>
            <person name="Chillingworth T."/>
            <person name="Churcher C.M."/>
            <person name="Collins M."/>
            <person name="Connor R."/>
            <person name="Cronin A."/>
            <person name="Davis P."/>
            <person name="Feltwell T."/>
            <person name="Fraser A."/>
            <person name="Gentles S."/>
            <person name="Goble A."/>
            <person name="Hamlin N."/>
            <person name="Harris D.E."/>
            <person name="Hidalgo J."/>
            <person name="Hodgson G."/>
            <person name="Holroyd S."/>
            <person name="Hornsby T."/>
            <person name="Howarth S."/>
            <person name="Huckle E.J."/>
            <person name="Hunt S."/>
            <person name="Jagels K."/>
            <person name="James K.D."/>
            <person name="Jones L."/>
            <person name="Jones M."/>
            <person name="Leather S."/>
            <person name="McDonald S."/>
            <person name="McLean J."/>
            <person name="Mooney P."/>
            <person name="Moule S."/>
            <person name="Mungall K.L."/>
            <person name="Murphy L.D."/>
            <person name="Niblett D."/>
            <person name="Odell C."/>
            <person name="Oliver K."/>
            <person name="O'Neil S."/>
            <person name="Pearson D."/>
            <person name="Quail M.A."/>
            <person name="Rabbinowitsch E."/>
            <person name="Rutherford K.M."/>
            <person name="Rutter S."/>
            <person name="Saunders D."/>
            <person name="Seeger K."/>
            <person name="Sharp S."/>
            <person name="Skelton J."/>
            <person name="Simmonds M.N."/>
            <person name="Squares R."/>
            <person name="Squares S."/>
            <person name="Stevens K."/>
            <person name="Taylor K."/>
            <person name="Taylor R.G."/>
            <person name="Tivey A."/>
            <person name="Walsh S.V."/>
            <person name="Warren T."/>
            <person name="Whitehead S."/>
            <person name="Woodward J.R."/>
            <person name="Volckaert G."/>
            <person name="Aert R."/>
            <person name="Robben J."/>
            <person name="Grymonprez B."/>
            <person name="Weltjens I."/>
            <person name="Vanstreels E."/>
            <person name="Rieger M."/>
            <person name="Schaefer M."/>
            <person name="Mueller-Auer S."/>
            <person name="Gabel C."/>
            <person name="Fuchs M."/>
            <person name="Duesterhoeft A."/>
            <person name="Fritzc C."/>
            <person name="Holzer E."/>
            <person name="Moestl D."/>
            <person name="Hilbert H."/>
            <person name="Borzym K."/>
            <person name="Langer I."/>
            <person name="Beck A."/>
            <person name="Lehrach H."/>
            <person name="Reinhardt R."/>
            <person name="Pohl T.M."/>
            <person name="Eger P."/>
            <person name="Zimmermann W."/>
            <person name="Wedler H."/>
            <person name="Wambutt R."/>
            <person name="Purnelle B."/>
            <person name="Goffeau A."/>
            <person name="Cadieu E."/>
            <person name="Dreano S."/>
            <person name="Gloux S."/>
            <person name="Lelaure V."/>
            <person name="Mottier S."/>
            <person name="Galibert F."/>
            <person name="Aves S.J."/>
            <person name="Xiang Z."/>
            <person name="Hunt C."/>
            <person name="Moore K."/>
            <person name="Hurst S.M."/>
            <person name="Lucas M."/>
            <person name="Rochet M."/>
            <person name="Gaillardin C."/>
            <person name="Tallada V.A."/>
            <person name="Garzon A."/>
            <person name="Thode G."/>
            <person name="Daga R.R."/>
            <person name="Cruzado L."/>
            <person name="Jimenez J."/>
            <person name="Sanchez M."/>
            <person name="del Rey F."/>
            <person name="Benito J."/>
            <person name="Dominguez A."/>
            <person name="Revuelta J.L."/>
            <person name="Moreno S."/>
            <person name="Armstrong J."/>
            <person name="Forsburg S.L."/>
            <person name="Cerutti L."/>
            <person name="Lowe T."/>
            <person name="McCombie W.R."/>
            <person name="Paulsen I."/>
            <person name="Potashkin J."/>
            <person name="Shpakovski G.V."/>
            <person name="Ussery D."/>
            <person name="Barrell B.G."/>
            <person name="Nurse P."/>
        </authorList>
    </citation>
    <scope>NUCLEOTIDE SEQUENCE [LARGE SCALE GENOMIC DNA]</scope>
    <source>
        <strain>972 / ATCC 24843</strain>
    </source>
</reference>
<name>YAC4_SCHPO</name>
<evidence type="ECO:0000250" key="1"/>
<evidence type="ECO:0000255" key="2"/>
<evidence type="ECO:0000255" key="3">
    <source>
        <dbReference type="PROSITE-ProRule" id="PRU00175"/>
    </source>
</evidence>
<evidence type="ECO:0000255" key="4">
    <source>
        <dbReference type="PROSITE-ProRule" id="PRU00176"/>
    </source>
</evidence>
<evidence type="ECO:0000255" key="5">
    <source>
        <dbReference type="PROSITE-ProRule" id="PRU00723"/>
    </source>
</evidence>
<evidence type="ECO:0000256" key="6">
    <source>
        <dbReference type="SAM" id="MobiDB-lite"/>
    </source>
</evidence>
<evidence type="ECO:0000305" key="7"/>
<accession>Q09818</accession>
<proteinExistence type="inferred from homology"/>